<geneLocation type="plasmid">
    <name>p42f</name>
</geneLocation>
<dbReference type="EC" id="5.6.1.7" evidence="1"/>
<dbReference type="EMBL" id="CP000138">
    <property type="protein sequence ID" value="ABC94220.1"/>
    <property type="molecule type" value="Genomic_DNA"/>
</dbReference>
<dbReference type="RefSeq" id="WP_011428637.1">
    <property type="nucleotide sequence ID" value="NC_007766.1"/>
</dbReference>
<dbReference type="SMR" id="Q2JYW6"/>
<dbReference type="KEGG" id="ret:RHE_PF00330"/>
<dbReference type="HOGENOM" id="CLU_016503_3_0_5"/>
<dbReference type="OrthoDB" id="9766614at2"/>
<dbReference type="Proteomes" id="UP000001936">
    <property type="component" value="Plasmid p42f"/>
</dbReference>
<dbReference type="GO" id="GO:0005737">
    <property type="term" value="C:cytoplasm"/>
    <property type="evidence" value="ECO:0007669"/>
    <property type="project" value="UniProtKB-SubCell"/>
</dbReference>
<dbReference type="GO" id="GO:0005524">
    <property type="term" value="F:ATP binding"/>
    <property type="evidence" value="ECO:0007669"/>
    <property type="project" value="UniProtKB-UniRule"/>
</dbReference>
<dbReference type="GO" id="GO:0140662">
    <property type="term" value="F:ATP-dependent protein folding chaperone"/>
    <property type="evidence" value="ECO:0007669"/>
    <property type="project" value="InterPro"/>
</dbReference>
<dbReference type="GO" id="GO:0016853">
    <property type="term" value="F:isomerase activity"/>
    <property type="evidence" value="ECO:0007669"/>
    <property type="project" value="UniProtKB-KW"/>
</dbReference>
<dbReference type="GO" id="GO:0051082">
    <property type="term" value="F:unfolded protein binding"/>
    <property type="evidence" value="ECO:0007669"/>
    <property type="project" value="UniProtKB-UniRule"/>
</dbReference>
<dbReference type="GO" id="GO:0042026">
    <property type="term" value="P:protein refolding"/>
    <property type="evidence" value="ECO:0007669"/>
    <property type="project" value="UniProtKB-UniRule"/>
</dbReference>
<dbReference type="CDD" id="cd03344">
    <property type="entry name" value="GroEL"/>
    <property type="match status" value="1"/>
</dbReference>
<dbReference type="FunFam" id="1.10.560.10:FF:000001">
    <property type="entry name" value="60 kDa chaperonin"/>
    <property type="match status" value="1"/>
</dbReference>
<dbReference type="FunFam" id="3.50.7.10:FF:000001">
    <property type="entry name" value="60 kDa chaperonin"/>
    <property type="match status" value="1"/>
</dbReference>
<dbReference type="Gene3D" id="3.50.7.10">
    <property type="entry name" value="GroEL"/>
    <property type="match status" value="1"/>
</dbReference>
<dbReference type="Gene3D" id="1.10.560.10">
    <property type="entry name" value="GroEL-like equatorial domain"/>
    <property type="match status" value="1"/>
</dbReference>
<dbReference type="Gene3D" id="3.30.260.10">
    <property type="entry name" value="TCP-1-like chaperonin intermediate domain"/>
    <property type="match status" value="1"/>
</dbReference>
<dbReference type="HAMAP" id="MF_00600">
    <property type="entry name" value="CH60"/>
    <property type="match status" value="1"/>
</dbReference>
<dbReference type="InterPro" id="IPR018370">
    <property type="entry name" value="Chaperonin_Cpn60_CS"/>
</dbReference>
<dbReference type="InterPro" id="IPR001844">
    <property type="entry name" value="Cpn60/GroEL"/>
</dbReference>
<dbReference type="InterPro" id="IPR002423">
    <property type="entry name" value="Cpn60/GroEL/TCP-1"/>
</dbReference>
<dbReference type="InterPro" id="IPR027409">
    <property type="entry name" value="GroEL-like_apical_dom_sf"/>
</dbReference>
<dbReference type="InterPro" id="IPR027413">
    <property type="entry name" value="GROEL-like_equatorial_sf"/>
</dbReference>
<dbReference type="InterPro" id="IPR027410">
    <property type="entry name" value="TCP-1-like_intermed_sf"/>
</dbReference>
<dbReference type="NCBIfam" id="TIGR02348">
    <property type="entry name" value="GroEL"/>
    <property type="match status" value="1"/>
</dbReference>
<dbReference type="NCBIfam" id="NF000592">
    <property type="entry name" value="PRK00013.1"/>
    <property type="match status" value="1"/>
</dbReference>
<dbReference type="NCBIfam" id="NF009487">
    <property type="entry name" value="PRK12849.1"/>
    <property type="match status" value="1"/>
</dbReference>
<dbReference type="NCBIfam" id="NF009488">
    <property type="entry name" value="PRK12850.1"/>
    <property type="match status" value="1"/>
</dbReference>
<dbReference type="NCBIfam" id="NF009489">
    <property type="entry name" value="PRK12851.1"/>
    <property type="match status" value="1"/>
</dbReference>
<dbReference type="PANTHER" id="PTHR45633">
    <property type="entry name" value="60 KDA HEAT SHOCK PROTEIN, MITOCHONDRIAL"/>
    <property type="match status" value="1"/>
</dbReference>
<dbReference type="Pfam" id="PF00118">
    <property type="entry name" value="Cpn60_TCP1"/>
    <property type="match status" value="1"/>
</dbReference>
<dbReference type="PRINTS" id="PR00298">
    <property type="entry name" value="CHAPERONIN60"/>
</dbReference>
<dbReference type="SUPFAM" id="SSF52029">
    <property type="entry name" value="GroEL apical domain-like"/>
    <property type="match status" value="1"/>
</dbReference>
<dbReference type="SUPFAM" id="SSF48592">
    <property type="entry name" value="GroEL equatorial domain-like"/>
    <property type="match status" value="1"/>
</dbReference>
<dbReference type="SUPFAM" id="SSF54849">
    <property type="entry name" value="GroEL-intermediate domain like"/>
    <property type="match status" value="1"/>
</dbReference>
<dbReference type="PROSITE" id="PS00296">
    <property type="entry name" value="CHAPERONINS_CPN60"/>
    <property type="match status" value="1"/>
</dbReference>
<reference key="1">
    <citation type="journal article" date="2006" name="Proc. Natl. Acad. Sci. U.S.A.">
        <title>The partitioned Rhizobium etli genome: genetic and metabolic redundancy in seven interacting replicons.</title>
        <authorList>
            <person name="Gonzalez V."/>
            <person name="Santamaria R.I."/>
            <person name="Bustos P."/>
            <person name="Hernandez-Gonzalez I."/>
            <person name="Medrano-Soto A."/>
            <person name="Moreno-Hagelsieb G."/>
            <person name="Janga S.C."/>
            <person name="Ramirez M.A."/>
            <person name="Jimenez-Jacinto V."/>
            <person name="Collado-Vides J."/>
            <person name="Davila G."/>
        </authorList>
    </citation>
    <scope>NUCLEOTIDE SEQUENCE [LARGE SCALE GENOMIC DNA]</scope>
    <source>
        <strain>ATCC 51251 / DSM 11541 / JCM 21823 / NBRC 15573 / CFN 42</strain>
    </source>
</reference>
<keyword id="KW-0067">ATP-binding</keyword>
<keyword id="KW-0143">Chaperone</keyword>
<keyword id="KW-0963">Cytoplasm</keyword>
<keyword id="KW-0413">Isomerase</keyword>
<keyword id="KW-0547">Nucleotide-binding</keyword>
<keyword id="KW-0614">Plasmid</keyword>
<keyword id="KW-1185">Reference proteome</keyword>
<feature type="chain" id="PRO_0000332056" description="Chaperonin GroEL 4">
    <location>
        <begin position="1"/>
        <end position="542"/>
    </location>
</feature>
<feature type="binding site" evidence="1">
    <location>
        <begin position="30"/>
        <end position="33"/>
    </location>
    <ligand>
        <name>ATP</name>
        <dbReference type="ChEBI" id="CHEBI:30616"/>
    </ligand>
</feature>
<feature type="binding site" evidence="1">
    <location>
        <position position="51"/>
    </location>
    <ligand>
        <name>ATP</name>
        <dbReference type="ChEBI" id="CHEBI:30616"/>
    </ligand>
</feature>
<feature type="binding site" evidence="1">
    <location>
        <begin position="87"/>
        <end position="91"/>
    </location>
    <ligand>
        <name>ATP</name>
        <dbReference type="ChEBI" id="CHEBI:30616"/>
    </ligand>
</feature>
<feature type="binding site" evidence="1">
    <location>
        <position position="415"/>
    </location>
    <ligand>
        <name>ATP</name>
        <dbReference type="ChEBI" id="CHEBI:30616"/>
    </ligand>
</feature>
<feature type="binding site" evidence="1">
    <location>
        <position position="496"/>
    </location>
    <ligand>
        <name>ATP</name>
        <dbReference type="ChEBI" id="CHEBI:30616"/>
    </ligand>
</feature>
<evidence type="ECO:0000255" key="1">
    <source>
        <dbReference type="HAMAP-Rule" id="MF_00600"/>
    </source>
</evidence>
<comment type="function">
    <text evidence="1">Together with its co-chaperonin GroES, plays an essential role in assisting protein folding. The GroEL-GroES system forms a nano-cage that allows encapsulation of the non-native substrate proteins and provides a physical environment optimized to promote and accelerate protein folding.</text>
</comment>
<comment type="catalytic activity">
    <reaction evidence="1">
        <text>ATP + H2O + a folded polypeptide = ADP + phosphate + an unfolded polypeptide.</text>
        <dbReference type="EC" id="5.6.1.7"/>
    </reaction>
</comment>
<comment type="subunit">
    <text evidence="1">Forms a cylinder of 14 subunits composed of two heptameric rings stacked back-to-back. Interacts with the co-chaperonin GroES.</text>
</comment>
<comment type="subcellular location">
    <subcellularLocation>
        <location evidence="1">Cytoplasm</location>
    </subcellularLocation>
</comment>
<comment type="similarity">
    <text evidence="1">Belongs to the chaperonin (HSP60) family.</text>
</comment>
<organism>
    <name type="scientific">Rhizobium etli (strain ATCC 51251 / DSM 11541 / JCM 21823 / NBRC 15573 / CFN 42)</name>
    <dbReference type="NCBI Taxonomy" id="347834"/>
    <lineage>
        <taxon>Bacteria</taxon>
        <taxon>Pseudomonadati</taxon>
        <taxon>Pseudomonadota</taxon>
        <taxon>Alphaproteobacteria</taxon>
        <taxon>Hyphomicrobiales</taxon>
        <taxon>Rhizobiaceae</taxon>
        <taxon>Rhizobium/Agrobacterium group</taxon>
        <taxon>Rhizobium</taxon>
    </lineage>
</organism>
<accession>Q2JYW6</accession>
<name>CH604_RHIEC</name>
<sequence length="542" mass="57696">MAAKEVKFSVEAREKMLRGVDILANAVKVTLGPKGRNVVIDKSFGAPRITKDGVSVAKEIELEDKFENMGAQMVREVASKTSDIAGDGTTTATVLAQAIVKEGAKAVTSGMNPMDLKRGIDLAVSAIVEELKANARKISNNAEIAQVGTISANGDAEIGRFLAEAVQKVGNDGVITVEEAKTAETELEVVEGMQFDRGYLSPYFVTNADKMRVEFEDPYILIHEKKLSNLQSMLPILEAVVQSGKPLLIIAEDVEGEALATLVVNKLRGGLKIAAVKAPGFGDRRKAMLEDIAILTAGTVISEDLGIKLENVTLNMLGRAKKITVEKENTTIIDGVGSKEEISGRIAQIKAQIEETTSDYDREKLQERLAKLAGGVAVIRVGGSTEVEVKEKKDRVDDALHATRAAVEEGILPGGGVALLRAVKALDNIKTANDDQRVGVEIVRRALEAPARQIAENAGAEGSVVVGKLREKSDFSYGWNAQTGEFGDLYAQGVIDPAKVVRTALQDASSIAGLLVTTEAMIAEKPKKDAPPAMPAGAGMDF</sequence>
<protein>
    <recommendedName>
        <fullName evidence="1">Chaperonin GroEL 4</fullName>
        <ecNumber evidence="1">5.6.1.7</ecNumber>
    </recommendedName>
    <alternativeName>
        <fullName evidence="1">60 kDa chaperonin 4</fullName>
    </alternativeName>
    <alternativeName>
        <fullName evidence="1">Chaperonin-60 4</fullName>
        <shortName evidence="1">Cpn60 4</shortName>
    </alternativeName>
</protein>
<proteinExistence type="inferred from homology"/>
<gene>
    <name evidence="1" type="primary">groEL4</name>
    <name evidence="1" type="synonym">groL4</name>
    <name type="ordered locus">RHE_PF00330</name>
</gene>